<accession>Q7M4F0</accession>
<proteinExistence type="evidence at protein level"/>
<protein>
    <recommendedName>
        <fullName>Endocuticle structural glycoprotein SgAbd-9</fullName>
    </recommendedName>
</protein>
<comment type="function">
    <text>Component of the abdominal endocuticle.</text>
</comment>
<keyword id="KW-0193">Cuticle</keyword>
<keyword id="KW-0903">Direct protein sequencing</keyword>
<keyword id="KW-0325">Glycoprotein</keyword>
<keyword id="KW-0873">Pyrrolidone carboxylic acid</keyword>
<reference key="1">
    <citation type="journal article" date="1998" name="Insect Biochem. Mol. Biol.">
        <title>Amino acid sequence studies on endocuticular proteins from the desert locust, Schistocerca gregaria.</title>
        <authorList>
            <person name="Andersen S.O."/>
        </authorList>
    </citation>
    <scope>PROTEIN SEQUENCE</scope>
    <scope>PYROGLUTAMATE FORMATION AT GLN-1</scope>
    <scope>POST-TRANSLATIONAL MODIFICATIONS</scope>
    <source>
        <strain>Albino</strain>
        <tissue>Cuticle</tissue>
    </source>
</reference>
<name>CUD9_SCHGR</name>
<evidence type="ECO:0000255" key="1">
    <source>
        <dbReference type="PROSITE-ProRule" id="PRU00497"/>
    </source>
</evidence>
<evidence type="ECO:0000269" key="2">
    <source>
    </source>
</evidence>
<dbReference type="PIR" id="S78097">
    <property type="entry name" value="S78097"/>
</dbReference>
<dbReference type="OrthoDB" id="6379191at2759"/>
<dbReference type="GO" id="GO:0062129">
    <property type="term" value="C:chitin-based extracellular matrix"/>
    <property type="evidence" value="ECO:0007669"/>
    <property type="project" value="TreeGrafter"/>
</dbReference>
<dbReference type="GO" id="GO:0008010">
    <property type="term" value="F:structural constituent of chitin-based larval cuticle"/>
    <property type="evidence" value="ECO:0007669"/>
    <property type="project" value="TreeGrafter"/>
</dbReference>
<dbReference type="InterPro" id="IPR031311">
    <property type="entry name" value="CHIT_BIND_RR_consensus"/>
</dbReference>
<dbReference type="InterPro" id="IPR050468">
    <property type="entry name" value="Cuticle_Struct_Prot"/>
</dbReference>
<dbReference type="InterPro" id="IPR000618">
    <property type="entry name" value="Insect_cuticle"/>
</dbReference>
<dbReference type="PANTHER" id="PTHR10380">
    <property type="entry name" value="CUTICLE PROTEIN"/>
    <property type="match status" value="1"/>
</dbReference>
<dbReference type="PANTHER" id="PTHR10380:SF173">
    <property type="entry name" value="CUTICULAR PROTEIN 47EF, ISOFORM C-RELATED"/>
    <property type="match status" value="1"/>
</dbReference>
<dbReference type="Pfam" id="PF00379">
    <property type="entry name" value="Chitin_bind_4"/>
    <property type="match status" value="1"/>
</dbReference>
<dbReference type="PRINTS" id="PR00947">
    <property type="entry name" value="CUTICLE"/>
</dbReference>
<dbReference type="PROSITE" id="PS00233">
    <property type="entry name" value="CHIT_BIND_RR_1"/>
    <property type="match status" value="1"/>
</dbReference>
<dbReference type="PROSITE" id="PS51155">
    <property type="entry name" value="CHIT_BIND_RR_2"/>
    <property type="match status" value="1"/>
</dbReference>
<sequence>QVPFAPRPVIPGAFVPIVSQNFDLNGVDGSYTFSYESADGSARQESGVVNAPGTPLEAQAVQGSYTYVGTDGVPVQVNYVADENGFQPVGNVVAPAISRAVAAQVAQARAEGPILPGVPTPIPFRGRPF</sequence>
<feature type="chain" id="PRO_0000196125" description="Endocuticle structural glycoprotein SgAbd-9">
    <location>
        <begin position="1"/>
        <end position="129"/>
    </location>
</feature>
<feature type="domain" description="Chitin-binding type R&amp;R" evidence="1">
    <location>
        <begin position="28"/>
        <end position="98"/>
    </location>
</feature>
<feature type="modified residue" description="Pyrrolidone carboxylic acid" evidence="2">
    <location>
        <position position="1"/>
    </location>
</feature>
<feature type="glycosylation site" description="O-linked (HexNAc...) threonine">
    <location>
        <position position="120"/>
    </location>
</feature>
<organism>
    <name type="scientific">Schistocerca gregaria</name>
    <name type="common">Desert locust</name>
    <name type="synonym">Gryllus gregarius</name>
    <dbReference type="NCBI Taxonomy" id="7010"/>
    <lineage>
        <taxon>Eukaryota</taxon>
        <taxon>Metazoa</taxon>
        <taxon>Ecdysozoa</taxon>
        <taxon>Arthropoda</taxon>
        <taxon>Hexapoda</taxon>
        <taxon>Insecta</taxon>
        <taxon>Pterygota</taxon>
        <taxon>Neoptera</taxon>
        <taxon>Polyneoptera</taxon>
        <taxon>Orthoptera</taxon>
        <taxon>Caelifera</taxon>
        <taxon>Acrididea</taxon>
        <taxon>Acridomorpha</taxon>
        <taxon>Acridoidea</taxon>
        <taxon>Acrididae</taxon>
        <taxon>Cyrtacanthacridinae</taxon>
        <taxon>Schistocerca</taxon>
    </lineage>
</organism>